<dbReference type="SMR" id="C0HKJ3"/>
<dbReference type="GO" id="GO:0006952">
    <property type="term" value="P:defense response"/>
    <property type="evidence" value="ECO:0007669"/>
    <property type="project" value="UniProtKB-KW"/>
</dbReference>
<dbReference type="InterPro" id="IPR005535">
    <property type="entry name" value="Cyclotide"/>
</dbReference>
<dbReference type="InterPro" id="IPR012323">
    <property type="entry name" value="Cyclotide_bracelet_CS"/>
</dbReference>
<dbReference type="InterPro" id="IPR036146">
    <property type="entry name" value="Cyclotide_sf"/>
</dbReference>
<dbReference type="Pfam" id="PF03784">
    <property type="entry name" value="Cyclotide"/>
    <property type="match status" value="1"/>
</dbReference>
<dbReference type="PIRSF" id="PIRSF037891">
    <property type="entry name" value="Cycloviolacin"/>
    <property type="match status" value="1"/>
</dbReference>
<dbReference type="SUPFAM" id="SSF57038">
    <property type="entry name" value="Cyclotides"/>
    <property type="match status" value="1"/>
</dbReference>
<dbReference type="PROSITE" id="PS51052">
    <property type="entry name" value="CYCLOTIDE"/>
    <property type="match status" value="1"/>
</dbReference>
<dbReference type="PROSITE" id="PS60008">
    <property type="entry name" value="CYCLOTIDE_BRACELET"/>
    <property type="match status" value="1"/>
</dbReference>
<protein>
    <recommendedName>
        <fullName evidence="3">Cyclotide mden-K</fullName>
    </recommendedName>
</protein>
<proteinExistence type="evidence at protein level"/>
<reference evidence="4" key="1">
    <citation type="journal article" date="2017" name="J. Nat. Prod.">
        <title>Understanding the Diversity and Distribution of Cyclotides from Plants of Varied Genetic Origin.</title>
        <authorList>
            <person name="Ravipati A.S."/>
            <person name="Poth A.G."/>
            <person name="Troeira Henriques S."/>
            <person name="Bhandari M."/>
            <person name="Huang Y.H."/>
            <person name="Nino J."/>
            <person name="Colgrave M.L."/>
            <person name="Craik D.J."/>
        </authorList>
    </citation>
    <scope>PROTEIN SEQUENCE</scope>
</reference>
<accession>C0HKJ3</accession>
<feature type="peptide" id="PRO_0000441374" description="Cyclotide mden-K" evidence="2">
    <location>
        <begin position="1"/>
        <end position="31"/>
    </location>
</feature>
<feature type="disulfide bond" evidence="1">
    <location>
        <begin position="5"/>
        <end position="21"/>
    </location>
</feature>
<feature type="disulfide bond" evidence="1">
    <location>
        <begin position="9"/>
        <end position="23"/>
    </location>
</feature>
<feature type="disulfide bond" evidence="1">
    <location>
        <begin position="14"/>
        <end position="28"/>
    </location>
</feature>
<feature type="cross-link" description="Cyclopeptide (Gly-Asn)" evidence="3">
    <location>
        <begin position="1"/>
        <end position="31"/>
    </location>
</feature>
<comment type="function">
    <text evidence="1">Probably participates in a plant defense mechanism.</text>
</comment>
<comment type="domain">
    <text evidence="4">The presence of a 'disulfide through disulfide knot' structurally defines this protein as a knottin.</text>
</comment>
<comment type="PTM">
    <text evidence="1">This is a cyclic peptide.</text>
</comment>
<comment type="similarity">
    <text evidence="1">Belongs to the cyclotide family. Bracelet subfamily.</text>
</comment>
<comment type="caution">
    <text evidence="1">This peptide is cyclic. The start position was chosen by similarity to Oak1 (kalata B1) for which the DNA sequence is known.</text>
</comment>
<evidence type="ECO:0000255" key="1">
    <source>
        <dbReference type="PROSITE-ProRule" id="PRU00395"/>
    </source>
</evidence>
<evidence type="ECO:0000269" key="2">
    <source>
    </source>
</evidence>
<evidence type="ECO:0000303" key="3">
    <source>
    </source>
</evidence>
<evidence type="ECO:0000305" key="4"/>
<sequence>GSIPCGESCVWIPCISSVVGCACKNKVCYKN</sequence>
<organism evidence="3">
    <name type="scientific">Melicytus dentatus</name>
    <name type="common">Tree violet</name>
    <dbReference type="NCBI Taxonomy" id="491106"/>
    <lineage>
        <taxon>Eukaryota</taxon>
        <taxon>Viridiplantae</taxon>
        <taxon>Streptophyta</taxon>
        <taxon>Embryophyta</taxon>
        <taxon>Tracheophyta</taxon>
        <taxon>Spermatophyta</taxon>
        <taxon>Magnoliopsida</taxon>
        <taxon>eudicotyledons</taxon>
        <taxon>Gunneridae</taxon>
        <taxon>Pentapetalae</taxon>
        <taxon>rosids</taxon>
        <taxon>fabids</taxon>
        <taxon>Malpighiales</taxon>
        <taxon>Violaceae</taxon>
        <taxon>Melicytus</taxon>
    </lineage>
</organism>
<keyword id="KW-0903">Direct protein sequencing</keyword>
<keyword id="KW-1015">Disulfide bond</keyword>
<keyword id="KW-0611">Plant defense</keyword>
<name>CYMEK_MELDN</name>